<accession>Q6R0H1</accession>
<accession>B9DFD7</accession>
<accession>B9DFM4</accession>
<accession>O81713</accession>
<accession>Q9MAM8</accession>
<evidence type="ECO:0000250" key="1">
    <source>
        <dbReference type="UniProtKB" id="P92973"/>
    </source>
</evidence>
<evidence type="ECO:0000255" key="2">
    <source>
        <dbReference type="PROSITE-ProRule" id="PRU00625"/>
    </source>
</evidence>
<evidence type="ECO:0000256" key="3">
    <source>
        <dbReference type="SAM" id="MobiDB-lite"/>
    </source>
</evidence>
<evidence type="ECO:0000269" key="4">
    <source>
    </source>
</evidence>
<evidence type="ECO:0000269" key="5">
    <source>
    </source>
</evidence>
<evidence type="ECO:0000269" key="6">
    <source>
    </source>
</evidence>
<evidence type="ECO:0000269" key="7">
    <source>
    </source>
</evidence>
<evidence type="ECO:0000269" key="8">
    <source>
    </source>
</evidence>
<evidence type="ECO:0000269" key="9">
    <source>
    </source>
</evidence>
<evidence type="ECO:0000269" key="10">
    <source>
    </source>
</evidence>
<evidence type="ECO:0000269" key="11">
    <source>
    </source>
</evidence>
<evidence type="ECO:0000269" key="12">
    <source>
    </source>
</evidence>
<evidence type="ECO:0000269" key="13">
    <source>
    </source>
</evidence>
<evidence type="ECO:0000269" key="14">
    <source>
    </source>
</evidence>
<evidence type="ECO:0000303" key="15">
    <source>
    </source>
</evidence>
<evidence type="ECO:0000305" key="16"/>
<evidence type="ECO:0000312" key="17">
    <source>
        <dbReference type="Araport" id="AT1G01060"/>
    </source>
</evidence>
<evidence type="ECO:0000312" key="18">
    <source>
        <dbReference type="EMBL" id="AAF26474.1"/>
    </source>
</evidence>
<gene>
    <name evidence="15" type="primary">LHY</name>
    <name evidence="17" type="ordered locus">At1g01060</name>
    <name evidence="18" type="ORF">T25K16.6</name>
</gene>
<sequence length="645" mass="70438">MDTNTSGEELLAKARKPYTITKQRERWTEDEHERFLEALRLYGRAWQRIEEHIGTKTAVQIRSHAQKFFTKLEKEAEVKGIPVCQALDIEIPPPRPKRKPNTPYPRKPGNNGTSSSQVSSAKDAKLVSSASSSQLNQAFLDLEKMPFSEKTSTGKENQDENCSGVSTVNKYPLPTKQVSGDIETSKTSTVDNAVQDVPKKNKDKDGNDGTTVHSMQNYPWHFHADIVNGNIAKCPQNHPSGMVSQDFMFHPMREETHGHANLQATTASATTTASHQAFPACHSQDDYRSFLQISSTFSNLIMSTLLQNPAAHAAATFAASVWPYASVGNSGDSSTPMSSSPPSITAIAAATVAAATAWWASHGLLPVCAPAPITCVPFSTVAVPTPAMTEMDTVENTQPFEKQNTALQDQNLASKSPASSSDDSDETGVTKLNADSKTNDDKIEEVVVTAAVHDSNTAQKKNLVDRSSCGSNTPSGSDAETDALDKMEKDKEDVKETDENQPDVIELNNRKIKMRDNNSNNNATTDSWKEVSEEGRIAFQALFARERLPQSFSPPQVAENVNRKQSDTSMPLAPNFKSQDSCAADQEGVVMIGVGTCKSLKTRQTGFKPYKRCSMEVKESQVGNINNQSDEKVCKRLRLEGEAST</sequence>
<organism>
    <name type="scientific">Arabidopsis thaliana</name>
    <name type="common">Mouse-ear cress</name>
    <dbReference type="NCBI Taxonomy" id="3702"/>
    <lineage>
        <taxon>Eukaryota</taxon>
        <taxon>Viridiplantae</taxon>
        <taxon>Streptophyta</taxon>
        <taxon>Embryophyta</taxon>
        <taxon>Tracheophyta</taxon>
        <taxon>Spermatophyta</taxon>
        <taxon>Magnoliopsida</taxon>
        <taxon>eudicotyledons</taxon>
        <taxon>Gunneridae</taxon>
        <taxon>Pentapetalae</taxon>
        <taxon>rosids</taxon>
        <taxon>malvids</taxon>
        <taxon>Brassicales</taxon>
        <taxon>Brassicaceae</taxon>
        <taxon>Camelineae</taxon>
        <taxon>Arabidopsis</taxon>
    </lineage>
</organism>
<keyword id="KW-0025">Alternative splicing</keyword>
<keyword id="KW-0090">Biological rhythms</keyword>
<keyword id="KW-0238">DNA-binding</keyword>
<keyword id="KW-0539">Nucleus</keyword>
<keyword id="KW-0597">Phosphoprotein</keyword>
<keyword id="KW-1185">Reference proteome</keyword>
<keyword id="KW-0804">Transcription</keyword>
<keyword id="KW-0805">Transcription regulation</keyword>
<protein>
    <recommendedName>
        <fullName evidence="15">Protein LHY</fullName>
    </recommendedName>
    <alternativeName>
        <fullName evidence="15">MYB-related transcription factor LHY</fullName>
    </alternativeName>
    <alternativeName>
        <fullName evidence="15">Protein LATE ELONGATED HYPOCOTYL</fullName>
    </alternativeName>
</protein>
<dbReference type="EMBL" id="AJ006404">
    <property type="protein sequence ID" value="CAA07004.1"/>
    <property type="molecule type" value="mRNA"/>
</dbReference>
<dbReference type="EMBL" id="AY519507">
    <property type="protein sequence ID" value="AAS09977.1"/>
    <property type="molecule type" value="mRNA"/>
</dbReference>
<dbReference type="EMBL" id="AC007323">
    <property type="protein sequence ID" value="AAF26474.1"/>
    <property type="status" value="ALT_SEQ"/>
    <property type="molecule type" value="Genomic_DNA"/>
</dbReference>
<dbReference type="EMBL" id="CP002684">
    <property type="protein sequence ID" value="AEE27223.1"/>
    <property type="molecule type" value="Genomic_DNA"/>
</dbReference>
<dbReference type="EMBL" id="CP002684">
    <property type="protein sequence ID" value="AEE27224.1"/>
    <property type="molecule type" value="Genomic_DNA"/>
</dbReference>
<dbReference type="EMBL" id="CP002684">
    <property type="protein sequence ID" value="AEE27225.1"/>
    <property type="molecule type" value="Genomic_DNA"/>
</dbReference>
<dbReference type="EMBL" id="CP002684">
    <property type="protein sequence ID" value="ANM58172.1"/>
    <property type="molecule type" value="Genomic_DNA"/>
</dbReference>
<dbReference type="EMBL" id="CP002684">
    <property type="protein sequence ID" value="ANM58174.1"/>
    <property type="molecule type" value="Genomic_DNA"/>
</dbReference>
<dbReference type="EMBL" id="AK316728">
    <property type="protein sequence ID" value="BAH19454.1"/>
    <property type="molecule type" value="mRNA"/>
</dbReference>
<dbReference type="EMBL" id="AK316829">
    <property type="protein sequence ID" value="BAH19541.1"/>
    <property type="molecule type" value="mRNA"/>
</dbReference>
<dbReference type="RefSeq" id="NP_001030924.1">
    <molecule id="Q6R0H1-1"/>
    <property type="nucleotide sequence ID" value="NM_001035847.1"/>
</dbReference>
<dbReference type="RefSeq" id="NP_001320627.1">
    <molecule id="Q6R0H1-1"/>
    <property type="nucleotide sequence ID" value="NM_001331247.1"/>
</dbReference>
<dbReference type="RefSeq" id="NP_001320629.1">
    <molecule id="Q6R0H1-1"/>
    <property type="nucleotide sequence ID" value="NM_001331248.1"/>
</dbReference>
<dbReference type="RefSeq" id="NP_171614.1">
    <molecule id="Q6R0H1-1"/>
    <property type="nucleotide sequence ID" value="NM_099988.4"/>
</dbReference>
<dbReference type="RefSeq" id="NP_849568.1">
    <molecule id="Q6R0H1-1"/>
    <property type="nucleotide sequence ID" value="NM_179237.1"/>
</dbReference>
<dbReference type="SMR" id="Q6R0H1"/>
<dbReference type="BioGRID" id="24576">
    <property type="interactions" value="22"/>
</dbReference>
<dbReference type="FunCoup" id="Q6R0H1">
    <property type="interactions" value="216"/>
</dbReference>
<dbReference type="IntAct" id="Q6R0H1">
    <property type="interactions" value="8"/>
</dbReference>
<dbReference type="STRING" id="3702.Q6R0H1"/>
<dbReference type="GlyGen" id="Q6R0H1">
    <property type="glycosylation" value="1 site"/>
</dbReference>
<dbReference type="iPTMnet" id="Q6R0H1"/>
<dbReference type="PaxDb" id="3702-AT1G01060.2"/>
<dbReference type="ProteomicsDB" id="238382">
    <molecule id="Q6R0H1-1"/>
</dbReference>
<dbReference type="EnsemblPlants" id="AT1G01060.1">
    <molecule id="Q6R0H1-1"/>
    <property type="protein sequence ID" value="AT1G01060.1"/>
    <property type="gene ID" value="AT1G01060"/>
</dbReference>
<dbReference type="EnsemblPlants" id="AT1G01060.2">
    <molecule id="Q6R0H1-1"/>
    <property type="protein sequence ID" value="AT1G01060.2"/>
    <property type="gene ID" value="AT1G01060"/>
</dbReference>
<dbReference type="EnsemblPlants" id="AT1G01060.3">
    <molecule id="Q6R0H1-1"/>
    <property type="protein sequence ID" value="AT1G01060.3"/>
    <property type="gene ID" value="AT1G01060"/>
</dbReference>
<dbReference type="EnsemblPlants" id="AT1G01060.7">
    <molecule id="Q6R0H1-1"/>
    <property type="protein sequence ID" value="AT1G01060.7"/>
    <property type="gene ID" value="AT1G01060"/>
</dbReference>
<dbReference type="EnsemblPlants" id="AT1G01060.8">
    <molecule id="Q6R0H1-1"/>
    <property type="protein sequence ID" value="AT1G01060.8"/>
    <property type="gene ID" value="AT1G01060"/>
</dbReference>
<dbReference type="GeneID" id="839341"/>
<dbReference type="Gramene" id="AT1G01060.1">
    <molecule id="Q6R0H1-1"/>
    <property type="protein sequence ID" value="AT1G01060.1"/>
    <property type="gene ID" value="AT1G01060"/>
</dbReference>
<dbReference type="Gramene" id="AT1G01060.2">
    <molecule id="Q6R0H1-1"/>
    <property type="protein sequence ID" value="AT1G01060.2"/>
    <property type="gene ID" value="AT1G01060"/>
</dbReference>
<dbReference type="Gramene" id="AT1G01060.3">
    <molecule id="Q6R0H1-1"/>
    <property type="protein sequence ID" value="AT1G01060.3"/>
    <property type="gene ID" value="AT1G01060"/>
</dbReference>
<dbReference type="Gramene" id="AT1G01060.7">
    <molecule id="Q6R0H1-1"/>
    <property type="protein sequence ID" value="AT1G01060.7"/>
    <property type="gene ID" value="AT1G01060"/>
</dbReference>
<dbReference type="Gramene" id="AT1G01060.8">
    <molecule id="Q6R0H1-1"/>
    <property type="protein sequence ID" value="AT1G01060.8"/>
    <property type="gene ID" value="AT1G01060"/>
</dbReference>
<dbReference type="KEGG" id="ath:AT1G01060"/>
<dbReference type="Araport" id="AT1G01060"/>
<dbReference type="TAIR" id="AT1G01060">
    <property type="gene designation" value="LHY"/>
</dbReference>
<dbReference type="eggNOG" id="KOG0724">
    <property type="taxonomic scope" value="Eukaryota"/>
</dbReference>
<dbReference type="InParanoid" id="Q6R0H1"/>
<dbReference type="OMA" id="KMHGRAW"/>
<dbReference type="PhylomeDB" id="Q6R0H1"/>
<dbReference type="PRO" id="PR:Q6R0H1"/>
<dbReference type="Proteomes" id="UP000006548">
    <property type="component" value="Chromosome 1"/>
</dbReference>
<dbReference type="ExpressionAtlas" id="Q6R0H1">
    <property type="expression patterns" value="baseline and differential"/>
</dbReference>
<dbReference type="GO" id="GO:0005634">
    <property type="term" value="C:nucleus"/>
    <property type="evidence" value="ECO:0007669"/>
    <property type="project" value="UniProtKB-SubCell"/>
</dbReference>
<dbReference type="GO" id="GO:0003700">
    <property type="term" value="F:DNA-binding transcription factor activity"/>
    <property type="evidence" value="ECO:0000314"/>
    <property type="project" value="UniProtKB"/>
</dbReference>
<dbReference type="GO" id="GO:0000976">
    <property type="term" value="F:transcription cis-regulatory region binding"/>
    <property type="evidence" value="ECO:0000314"/>
    <property type="project" value="UniProtKB"/>
</dbReference>
<dbReference type="GO" id="GO:0007623">
    <property type="term" value="P:circadian rhythm"/>
    <property type="evidence" value="ECO:0000316"/>
    <property type="project" value="TAIR"/>
</dbReference>
<dbReference type="GO" id="GO:0048574">
    <property type="term" value="P:long-day photoperiodism, flowering"/>
    <property type="evidence" value="ECO:0000316"/>
    <property type="project" value="TAIR"/>
</dbReference>
<dbReference type="GO" id="GO:0042754">
    <property type="term" value="P:negative regulation of circadian rhythm"/>
    <property type="evidence" value="ECO:0000315"/>
    <property type="project" value="TAIR"/>
</dbReference>
<dbReference type="GO" id="GO:0043433">
    <property type="term" value="P:negative regulation of DNA-binding transcription factor activity"/>
    <property type="evidence" value="ECO:0000315"/>
    <property type="project" value="UniProtKB"/>
</dbReference>
<dbReference type="GO" id="GO:0042752">
    <property type="term" value="P:regulation of circadian rhythm"/>
    <property type="evidence" value="ECO:0000315"/>
    <property type="project" value="UniProtKB"/>
</dbReference>
<dbReference type="GO" id="GO:0006355">
    <property type="term" value="P:regulation of DNA-templated transcription"/>
    <property type="evidence" value="ECO:0000304"/>
    <property type="project" value="TAIR"/>
</dbReference>
<dbReference type="GO" id="GO:0009409">
    <property type="term" value="P:response to cold"/>
    <property type="evidence" value="ECO:0000316"/>
    <property type="project" value="TAIR"/>
</dbReference>
<dbReference type="CDD" id="cd00167">
    <property type="entry name" value="SANT"/>
    <property type="match status" value="1"/>
</dbReference>
<dbReference type="FunFam" id="1.10.10.60:FF:000023">
    <property type="entry name" value="protein REVEILLE 6 isoform X1"/>
    <property type="match status" value="1"/>
</dbReference>
<dbReference type="Gene3D" id="1.10.10.60">
    <property type="entry name" value="Homeodomain-like"/>
    <property type="match status" value="1"/>
</dbReference>
<dbReference type="InterPro" id="IPR009057">
    <property type="entry name" value="Homeodomain-like_sf"/>
</dbReference>
<dbReference type="InterPro" id="IPR017930">
    <property type="entry name" value="Myb_dom"/>
</dbReference>
<dbReference type="InterPro" id="IPR006447">
    <property type="entry name" value="Myb_dom_plants"/>
</dbReference>
<dbReference type="InterPro" id="IPR001005">
    <property type="entry name" value="SANT/Myb"/>
</dbReference>
<dbReference type="InterPro" id="IPR017884">
    <property type="entry name" value="SANT_dom"/>
</dbReference>
<dbReference type="NCBIfam" id="TIGR01557">
    <property type="entry name" value="myb_SHAQKYF"/>
    <property type="match status" value="1"/>
</dbReference>
<dbReference type="PANTHER" id="PTHR12802:SF176">
    <property type="entry name" value="PROTEIN LHY"/>
    <property type="match status" value="1"/>
</dbReference>
<dbReference type="PANTHER" id="PTHR12802">
    <property type="entry name" value="SWI/SNF COMPLEX-RELATED"/>
    <property type="match status" value="1"/>
</dbReference>
<dbReference type="Pfam" id="PF00249">
    <property type="entry name" value="Myb_DNA-binding"/>
    <property type="match status" value="1"/>
</dbReference>
<dbReference type="SMART" id="SM00717">
    <property type="entry name" value="SANT"/>
    <property type="match status" value="1"/>
</dbReference>
<dbReference type="SUPFAM" id="SSF46689">
    <property type="entry name" value="Homeodomain-like"/>
    <property type="match status" value="1"/>
</dbReference>
<dbReference type="PROSITE" id="PS51294">
    <property type="entry name" value="HTH_MYB"/>
    <property type="match status" value="1"/>
</dbReference>
<feature type="chain" id="PRO_0000388998" description="Protein LHY">
    <location>
        <begin position="1"/>
        <end position="645"/>
    </location>
</feature>
<feature type="domain" description="HTH myb-type" evidence="2">
    <location>
        <begin position="19"/>
        <end position="73"/>
    </location>
</feature>
<feature type="DNA-binding region" description="H-T-H motif" evidence="2">
    <location>
        <begin position="46"/>
        <end position="69"/>
    </location>
</feature>
<feature type="region of interest" description="Disordered" evidence="3">
    <location>
        <begin position="89"/>
        <end position="127"/>
    </location>
</feature>
<feature type="region of interest" description="Disordered" evidence="3">
    <location>
        <begin position="149"/>
        <end position="212"/>
    </location>
</feature>
<feature type="region of interest" description="Disordered" evidence="3">
    <location>
        <begin position="410"/>
        <end position="437"/>
    </location>
</feature>
<feature type="region of interest" description="Disordered" evidence="3">
    <location>
        <begin position="458"/>
        <end position="500"/>
    </location>
</feature>
<feature type="compositionally biased region" description="Polar residues" evidence="3">
    <location>
        <begin position="110"/>
        <end position="120"/>
    </location>
</feature>
<feature type="compositionally biased region" description="Basic and acidic residues" evidence="3">
    <location>
        <begin position="149"/>
        <end position="158"/>
    </location>
</feature>
<feature type="compositionally biased region" description="Polar residues" evidence="3">
    <location>
        <begin position="159"/>
        <end position="169"/>
    </location>
</feature>
<feature type="compositionally biased region" description="Basic and acidic residues" evidence="3">
    <location>
        <begin position="197"/>
        <end position="207"/>
    </location>
</feature>
<feature type="compositionally biased region" description="Polar residues" evidence="3">
    <location>
        <begin position="468"/>
        <end position="478"/>
    </location>
</feature>
<feature type="compositionally biased region" description="Basic and acidic residues" evidence="3">
    <location>
        <begin position="483"/>
        <end position="498"/>
    </location>
</feature>
<feature type="modified residue" description="Phosphoserine" evidence="1">
    <location>
        <position position="6"/>
    </location>
</feature>
<feature type="sequence conflict" description="In Ref. 5; BAH19541." evidence="16" ref="5">
    <original>R</original>
    <variation>Q</variation>
    <location>
        <position position="98"/>
    </location>
</feature>
<feature type="sequence conflict" description="In Ref. 2; AAS09977." evidence="16" ref="2">
    <original>Q</original>
    <variation>R</variation>
    <location>
        <position position="408"/>
    </location>
</feature>
<feature type="sequence conflict" description="In Ref. 1; CAA07004." evidence="16" ref="1">
    <original>N</original>
    <variation>T</variation>
    <location>
        <position position="411"/>
    </location>
</feature>
<feature type="sequence conflict" description="In Ref. 5; BAH19541." evidence="16" ref="5">
    <original>I</original>
    <variation>V</variation>
    <location>
        <position position="537"/>
    </location>
</feature>
<reference key="1">
    <citation type="journal article" date="1998" name="Cell">
        <title>The late elongated hypocotyl mutation of Arabidopsis disrupts circadian rhythms and the photoperiodic control of flowering.</title>
        <authorList>
            <person name="Schaffer R."/>
            <person name="Ramsay N."/>
            <person name="Samach A."/>
            <person name="Corden S."/>
            <person name="Putterill J."/>
            <person name="Carre I.A."/>
            <person name="Coupland G."/>
        </authorList>
    </citation>
    <scope>NUCLEOTIDE SEQUENCE [MRNA]</scope>
    <scope>FUNCTION</scope>
    <scope>INDUCTION</scope>
</reference>
<reference key="2">
    <citation type="journal article" date="2006" name="Plant Mol. Biol.">
        <title>The MYB transcription factor superfamily of Arabidopsis: expression analysis and phylogenetic comparison with the rice MYB family.</title>
        <authorList>
            <person name="Chen Y."/>
            <person name="Yang X."/>
            <person name="He K."/>
            <person name="Liu M."/>
            <person name="Li J."/>
            <person name="Gao Z."/>
            <person name="Lin Z."/>
            <person name="Zhang Y."/>
            <person name="Wang X."/>
            <person name="Qiu X."/>
            <person name="Shen Y."/>
            <person name="Zhang L."/>
            <person name="Deng X."/>
            <person name="Luo J."/>
            <person name="Deng X.-W."/>
            <person name="Chen Z."/>
            <person name="Gu H."/>
            <person name="Qu L.-J."/>
        </authorList>
    </citation>
    <scope>NUCLEOTIDE SEQUENCE [MRNA]</scope>
    <scope>GENE FAMILY</scope>
</reference>
<reference key="3">
    <citation type="journal article" date="2000" name="Nature">
        <title>Sequence and analysis of chromosome 1 of the plant Arabidopsis thaliana.</title>
        <authorList>
            <person name="Theologis A."/>
            <person name="Ecker J.R."/>
            <person name="Palm C.J."/>
            <person name="Federspiel N.A."/>
            <person name="Kaul S."/>
            <person name="White O."/>
            <person name="Alonso J."/>
            <person name="Altafi H."/>
            <person name="Araujo R."/>
            <person name="Bowman C.L."/>
            <person name="Brooks S.Y."/>
            <person name="Buehler E."/>
            <person name="Chan A."/>
            <person name="Chao Q."/>
            <person name="Chen H."/>
            <person name="Cheuk R.F."/>
            <person name="Chin C.W."/>
            <person name="Chung M.K."/>
            <person name="Conn L."/>
            <person name="Conway A.B."/>
            <person name="Conway A.R."/>
            <person name="Creasy T.H."/>
            <person name="Dewar K."/>
            <person name="Dunn P."/>
            <person name="Etgu P."/>
            <person name="Feldblyum T.V."/>
            <person name="Feng J.-D."/>
            <person name="Fong B."/>
            <person name="Fujii C.Y."/>
            <person name="Gill J.E."/>
            <person name="Goldsmith A.D."/>
            <person name="Haas B."/>
            <person name="Hansen N.F."/>
            <person name="Hughes B."/>
            <person name="Huizar L."/>
            <person name="Hunter J.L."/>
            <person name="Jenkins J."/>
            <person name="Johnson-Hopson C."/>
            <person name="Khan S."/>
            <person name="Khaykin E."/>
            <person name="Kim C.J."/>
            <person name="Koo H.L."/>
            <person name="Kremenetskaia I."/>
            <person name="Kurtz D.B."/>
            <person name="Kwan A."/>
            <person name="Lam B."/>
            <person name="Langin-Hooper S."/>
            <person name="Lee A."/>
            <person name="Lee J.M."/>
            <person name="Lenz C.A."/>
            <person name="Li J.H."/>
            <person name="Li Y.-P."/>
            <person name="Lin X."/>
            <person name="Liu S.X."/>
            <person name="Liu Z.A."/>
            <person name="Luros J.S."/>
            <person name="Maiti R."/>
            <person name="Marziali A."/>
            <person name="Militscher J."/>
            <person name="Miranda M."/>
            <person name="Nguyen M."/>
            <person name="Nierman W.C."/>
            <person name="Osborne B.I."/>
            <person name="Pai G."/>
            <person name="Peterson J."/>
            <person name="Pham P.K."/>
            <person name="Rizzo M."/>
            <person name="Rooney T."/>
            <person name="Rowley D."/>
            <person name="Sakano H."/>
            <person name="Salzberg S.L."/>
            <person name="Schwartz J.R."/>
            <person name="Shinn P."/>
            <person name="Southwick A.M."/>
            <person name="Sun H."/>
            <person name="Tallon L.J."/>
            <person name="Tambunga G."/>
            <person name="Toriumi M.J."/>
            <person name="Town C.D."/>
            <person name="Utterback T."/>
            <person name="Van Aken S."/>
            <person name="Vaysberg M."/>
            <person name="Vysotskaia V.S."/>
            <person name="Walker M."/>
            <person name="Wu D."/>
            <person name="Yu G."/>
            <person name="Fraser C.M."/>
            <person name="Venter J.C."/>
            <person name="Davis R.W."/>
        </authorList>
    </citation>
    <scope>NUCLEOTIDE SEQUENCE [LARGE SCALE GENOMIC DNA]</scope>
    <source>
        <strain>cv. Columbia</strain>
    </source>
</reference>
<reference key="4">
    <citation type="journal article" date="2017" name="Plant J.">
        <title>Araport11: a complete reannotation of the Arabidopsis thaliana reference genome.</title>
        <authorList>
            <person name="Cheng C.Y."/>
            <person name="Krishnakumar V."/>
            <person name="Chan A.P."/>
            <person name="Thibaud-Nissen F."/>
            <person name="Schobel S."/>
            <person name="Town C.D."/>
        </authorList>
    </citation>
    <scope>GENOME REANNOTATION</scope>
    <source>
        <strain>cv. Columbia</strain>
    </source>
</reference>
<reference key="5">
    <citation type="journal article" date="2009" name="DNA Res.">
        <title>Analysis of multiple occurrences of alternative splicing events in Arabidopsis thaliana using novel sequenced full-length cDNAs.</title>
        <authorList>
            <person name="Iida K."/>
            <person name="Fukami-Kobayashi K."/>
            <person name="Toyoda A."/>
            <person name="Sakaki Y."/>
            <person name="Kobayashi M."/>
            <person name="Seki M."/>
            <person name="Shinozaki K."/>
        </authorList>
    </citation>
    <scope>NUCLEOTIDE SEQUENCE [LARGE SCALE MRNA]</scope>
    <source>
        <strain>cv. Columbia</strain>
    </source>
</reference>
<reference key="6">
    <citation type="journal article" date="1999" name="Proc. Natl. Acad. Sci. U.S.A.">
        <title>The protein kinase CK2 is involved in regulation of circadian rhythms in Arabidopsis.</title>
        <authorList>
            <person name="Sugano S."/>
            <person name="Andronis C."/>
            <person name="Ong M.S."/>
            <person name="Green R.M."/>
            <person name="Tobin E.M."/>
        </authorList>
    </citation>
    <scope>PHOSPHORYLATION</scope>
    <scope>INTERACTION WITH CKB1 AND CKB3</scope>
</reference>
<reference key="7">
    <citation type="journal article" date="2002" name="Dev. Cell">
        <title>LHY and CCA1 are partially redundant genes required to maintain circadian rhythms in Arabidopsis.</title>
        <authorList>
            <person name="Mizoguchi T."/>
            <person name="Wheatley K."/>
            <person name="Hanzawa Y."/>
            <person name="Wright L."/>
            <person name="Mizoguchi M."/>
            <person name="Song H.-R."/>
            <person name="Carre I.A."/>
            <person name="Coupland G."/>
        </authorList>
    </citation>
    <scope>FUNCTION</scope>
    <scope>DISRUPTION PHENOTYPE</scope>
</reference>
<reference key="8">
    <citation type="journal article" date="2003" name="EMBO J.">
        <title>Light-regulated translation mediates gated induction of the Arabidopsis clock protein LHY.</title>
        <authorList>
            <person name="Kim J.Y."/>
            <person name="Song H.R."/>
            <person name="Taylor B.L."/>
            <person name="Carre I.A."/>
        </authorList>
    </citation>
    <scope>INDUCTION BY LIGHT</scope>
</reference>
<reference key="9">
    <citation type="journal article" date="2008" name="Science">
        <title>The circadian clock in Arabidopsis roots is a simplified slave version of the clock in shoots.</title>
        <authorList>
            <person name="James A.B."/>
            <person name="Monreal J.A."/>
            <person name="Nimmo G.A."/>
            <person name="Kelly C.L."/>
            <person name="Herzyk P."/>
            <person name="Jenkins G.I."/>
            <person name="Nimmo H.G."/>
        </authorList>
    </citation>
    <scope>FUNCTION</scope>
    <scope>TISSUE SPECIFICITY</scope>
    <scope>INDUCTION</scope>
</reference>
<reference key="10">
    <citation type="journal article" date="2009" name="Plant Physiol.">
        <title>CIRCADIAN CLOCK ASSOCIATED1 and LATE ELONGATED HYPOCOTYL function synergistically in the circadian clock of Arabidopsis.</title>
        <authorList>
            <person name="Lu S.X."/>
            <person name="Knowles S.M."/>
            <person name="Andronis C."/>
            <person name="Ong M.S."/>
            <person name="Tobin E.M."/>
        </authorList>
    </citation>
    <scope>FUNCTION</scope>
    <scope>INDUCTION</scope>
    <scope>SUBCELLULAR LOCATION</scope>
    <scope>TISSUE SPECIFICITY</scope>
    <scope>SUBUNIT</scope>
    <scope>INTERACTION WITH CCA1</scope>
    <scope>DNA-BINDING</scope>
    <scope>DISRUPTION PHENOTYPE</scope>
</reference>
<reference key="11">
    <citation type="journal article" date="2009" name="Plant Physiol.">
        <title>Posttranslational regulation of CIRCADIAN CLOCK ASSOCIATED1 in the circadian oscillator of Arabidopsis.</title>
        <authorList>
            <person name="Yakir E."/>
            <person name="Hilman D."/>
            <person name="Kron I."/>
            <person name="Hassidim M."/>
            <person name="Melamed-Book N."/>
            <person name="Green R.M."/>
        </authorList>
    </citation>
    <scope>INTERACTION WITH CCA1</scope>
</reference>
<reference key="12">
    <citation type="journal article" date="2009" name="Science">
        <title>A functional genomics approach reveals CHE as a component of the Arabidopsis circadian clock.</title>
        <authorList>
            <person name="Pruneda-Paz J.L."/>
            <person name="Breton G."/>
            <person name="Para A."/>
            <person name="Kay S.A."/>
        </authorList>
    </citation>
    <scope>INDUCTION</scope>
</reference>
<reference key="13">
    <citation type="journal article" date="2010" name="Plant Cell">
        <title>PSEUDO-RESPONSE REGULATORS 9, 7, and 5 are transcriptional repressors in the Arabidopsis circadian clock.</title>
        <authorList>
            <person name="Nakamichi N."/>
            <person name="Kiba T."/>
            <person name="Henriques R."/>
            <person name="Mizuno T."/>
            <person name="Chua N.H."/>
            <person name="Sakakibara H."/>
        </authorList>
    </citation>
    <scope>INDUCTION</scope>
</reference>
<reference key="14">
    <citation type="journal article" date="2014" name="Plant Cell">
        <title>LNK1 and LNK2 are transcriptional coactivators in the Arabidopsis circadian oscillator.</title>
        <authorList>
            <person name="Xie Q."/>
            <person name="Wang P."/>
            <person name="Liu X."/>
            <person name="Yuan L."/>
            <person name="Wang L."/>
            <person name="Zhang C."/>
            <person name="Li Y."/>
            <person name="Xing H."/>
            <person name="Zhi L."/>
            <person name="Yue Z."/>
            <person name="Zhao C."/>
            <person name="McClung C.R."/>
            <person name="Xu X."/>
        </authorList>
    </citation>
    <scope>INTERACTION WITH LNK1 AND LNK2</scope>
</reference>
<reference key="15">
    <citation type="journal article" date="2019" name="Genome Biol.">
        <title>Diurnal regulation of SDG2 and JMJ14 by circadian clock oscillators orchestrates histone modification rhythms in Arabidopsis.</title>
        <authorList>
            <person name="Song Q."/>
            <person name="Huang T.-Y."/>
            <person name="Yu H.H."/>
            <person name="Ando A."/>
            <person name="Mas P."/>
            <person name="Ha M."/>
            <person name="Chen Z.J."/>
        </authorList>
    </citation>
    <scope>FUNCTION</scope>
    <scope>DISRUPTION PHENOTYPE</scope>
    <source>
        <strain>cv. Columbia</strain>
    </source>
</reference>
<comment type="function">
    <text evidence="5 7 8 13 14">Transcription factor involved in the circadian clock. Binds to the promoter region of APRR1/TOC1 and TCP21/CHE to repress their transcription. Represses both CCA1 and itself. May recognize the promoter of JMJ14 to regulates its expression during the night in a circadian manner (PubMed:31429787).</text>
</comment>
<comment type="subunit">
    <text evidence="4 8 10 12">Homodimer or heterodimer with CCA1. Interacts with CCA1 (via internal domain); independently of photoperiod. Functions probably as part of a large complex. Interacts with CKB1 and CKB3. Interacts with LNK1 and LNK2 (PubMed:25012192).</text>
</comment>
<comment type="subcellular location">
    <subcellularLocation>
        <location evidence="2 8">Nucleus</location>
    </subcellularLocation>
</comment>
<comment type="alternative products">
    <event type="alternative splicing"/>
    <isoform>
        <id>Q6R0H1-1</id>
        <name>1</name>
        <sequence type="displayed"/>
    </isoform>
    <text>A number of isoforms are produced. According to EST sequences.</text>
</comment>
<comment type="tissue specificity">
    <text evidence="7 8">Expressed in leaves, roots, stems, flowers and siliques.</text>
</comment>
<comment type="induction">
    <text evidence="6 7 8 9 11 14">Circadian-regulation with peak levels occurring around 1 hour after dawn. Up-regulated by APRR1/TOC1 and transiently by light treatment. Down-regulated by APRR5, APRR7 and APRR9.</text>
</comment>
<comment type="PTM">
    <text evidence="4">Phosphorylated by CK2.</text>
</comment>
<comment type="disruption phenotype">
    <text evidence="5 8 13">Shorter circadian oscillations (PubMed:12015970, PubMed:19218364). The double mutant cca1 lhy accumulates higher levels of JMJ14 but lower levels of ATXR3/SDG2, and exhibits damped H3K4me3 levels near the transcription start sites of genic regions (PubMed:31429787).</text>
</comment>
<comment type="miscellaneous">
    <text>CCA1 and LHY are only partially redundant, but they bind to the same region of the promoters.</text>
</comment>
<comment type="sequence caution" evidence="16">
    <conflict type="erroneous gene model prediction">
        <sequence resource="EMBL-CDS" id="AAF26474"/>
    </conflict>
</comment>
<name>LHY_ARATH</name>
<proteinExistence type="evidence at protein level"/>